<reference key="1">
    <citation type="journal article" date="2008" name="J. Bacteriol.">
        <title>Complete genome sequence of the soil actinomycete Kocuria rhizophila.</title>
        <authorList>
            <person name="Takarada H."/>
            <person name="Sekine M."/>
            <person name="Kosugi H."/>
            <person name="Matsuo Y."/>
            <person name="Fujisawa T."/>
            <person name="Omata S."/>
            <person name="Kishi E."/>
            <person name="Shimizu A."/>
            <person name="Tsukatani N."/>
            <person name="Tanikawa S."/>
            <person name="Fujita N."/>
            <person name="Harayama S."/>
        </authorList>
    </citation>
    <scope>NUCLEOTIDE SEQUENCE [LARGE SCALE GENOMIC DNA]</scope>
    <source>
        <strain>ATCC 9341 / DSM 348 / NBRC 103217 / DC2201</strain>
    </source>
</reference>
<keyword id="KW-1185">Reference proteome</keyword>
<keyword id="KW-0687">Ribonucleoprotein</keyword>
<keyword id="KW-0689">Ribosomal protein</keyword>
<sequence length="84" mass="9081">MAHKKGASSTRNGRDSNAQYLGVKRFGGQSVNAGEIIVRQRGTHFHPGLNMGRGKDDTLFALAAGVVEFGTRRGRRVVNIQTAE</sequence>
<accession>B2GGD8</accession>
<name>RL27_KOCRD</name>
<proteinExistence type="inferred from homology"/>
<protein>
    <recommendedName>
        <fullName evidence="1">Large ribosomal subunit protein bL27</fullName>
    </recommendedName>
    <alternativeName>
        <fullName evidence="2">50S ribosomal protein L27</fullName>
    </alternativeName>
</protein>
<organism>
    <name type="scientific">Kocuria rhizophila (strain ATCC 9341 / DSM 348 / NBRC 103217 / DC2201)</name>
    <dbReference type="NCBI Taxonomy" id="378753"/>
    <lineage>
        <taxon>Bacteria</taxon>
        <taxon>Bacillati</taxon>
        <taxon>Actinomycetota</taxon>
        <taxon>Actinomycetes</taxon>
        <taxon>Micrococcales</taxon>
        <taxon>Micrococcaceae</taxon>
        <taxon>Kocuria</taxon>
    </lineage>
</organism>
<gene>
    <name evidence="1" type="primary">rpmA</name>
    <name type="ordered locus">KRH_11310</name>
</gene>
<feature type="chain" id="PRO_1000128763" description="Large ribosomal subunit protein bL27">
    <location>
        <begin position="1"/>
        <end position="84"/>
    </location>
</feature>
<evidence type="ECO:0000255" key="1">
    <source>
        <dbReference type="HAMAP-Rule" id="MF_00539"/>
    </source>
</evidence>
<evidence type="ECO:0000305" key="2"/>
<comment type="similarity">
    <text evidence="1">Belongs to the bacterial ribosomal protein bL27 family.</text>
</comment>
<dbReference type="EMBL" id="AP009152">
    <property type="protein sequence ID" value="BAG29478.1"/>
    <property type="molecule type" value="Genomic_DNA"/>
</dbReference>
<dbReference type="RefSeq" id="WP_012398199.1">
    <property type="nucleotide sequence ID" value="NZ_VECX01000005.1"/>
</dbReference>
<dbReference type="SMR" id="B2GGD8"/>
<dbReference type="STRING" id="378753.KRH_11310"/>
<dbReference type="GeneID" id="93233303"/>
<dbReference type="KEGG" id="krh:KRH_11310"/>
<dbReference type="eggNOG" id="COG0211">
    <property type="taxonomic scope" value="Bacteria"/>
</dbReference>
<dbReference type="HOGENOM" id="CLU_095424_4_0_11"/>
<dbReference type="OrthoDB" id="9803474at2"/>
<dbReference type="Proteomes" id="UP000008838">
    <property type="component" value="Chromosome"/>
</dbReference>
<dbReference type="GO" id="GO:0022625">
    <property type="term" value="C:cytosolic large ribosomal subunit"/>
    <property type="evidence" value="ECO:0007669"/>
    <property type="project" value="TreeGrafter"/>
</dbReference>
<dbReference type="GO" id="GO:0003735">
    <property type="term" value="F:structural constituent of ribosome"/>
    <property type="evidence" value="ECO:0007669"/>
    <property type="project" value="InterPro"/>
</dbReference>
<dbReference type="GO" id="GO:0006412">
    <property type="term" value="P:translation"/>
    <property type="evidence" value="ECO:0007669"/>
    <property type="project" value="UniProtKB-UniRule"/>
</dbReference>
<dbReference type="FunFam" id="2.40.50.100:FF:000020">
    <property type="entry name" value="50S ribosomal protein L27"/>
    <property type="match status" value="1"/>
</dbReference>
<dbReference type="Gene3D" id="2.40.50.100">
    <property type="match status" value="1"/>
</dbReference>
<dbReference type="HAMAP" id="MF_00539">
    <property type="entry name" value="Ribosomal_bL27"/>
    <property type="match status" value="1"/>
</dbReference>
<dbReference type="InterPro" id="IPR001684">
    <property type="entry name" value="Ribosomal_bL27"/>
</dbReference>
<dbReference type="InterPro" id="IPR018261">
    <property type="entry name" value="Ribosomal_bL27_CS"/>
</dbReference>
<dbReference type="NCBIfam" id="TIGR00062">
    <property type="entry name" value="L27"/>
    <property type="match status" value="1"/>
</dbReference>
<dbReference type="PANTHER" id="PTHR15893:SF0">
    <property type="entry name" value="LARGE RIBOSOMAL SUBUNIT PROTEIN BL27M"/>
    <property type="match status" value="1"/>
</dbReference>
<dbReference type="PANTHER" id="PTHR15893">
    <property type="entry name" value="RIBOSOMAL PROTEIN L27"/>
    <property type="match status" value="1"/>
</dbReference>
<dbReference type="Pfam" id="PF01016">
    <property type="entry name" value="Ribosomal_L27"/>
    <property type="match status" value="1"/>
</dbReference>
<dbReference type="PRINTS" id="PR00063">
    <property type="entry name" value="RIBOSOMALL27"/>
</dbReference>
<dbReference type="SUPFAM" id="SSF110324">
    <property type="entry name" value="Ribosomal L27 protein-like"/>
    <property type="match status" value="1"/>
</dbReference>
<dbReference type="PROSITE" id="PS00831">
    <property type="entry name" value="RIBOSOMAL_L27"/>
    <property type="match status" value="1"/>
</dbReference>